<protein>
    <recommendedName>
        <fullName evidence="1">Probable endonuclease 4</fullName>
        <ecNumber evidence="1">3.1.21.2</ecNumber>
    </recommendedName>
    <alternativeName>
        <fullName evidence="1">Endodeoxyribonuclease IV</fullName>
    </alternativeName>
    <alternativeName>
        <fullName evidence="1">Endonuclease IV</fullName>
    </alternativeName>
</protein>
<feature type="chain" id="PRO_1000096869" description="Probable endonuclease 4">
    <location>
        <begin position="1"/>
        <end position="283"/>
    </location>
</feature>
<feature type="binding site" evidence="1">
    <location>
        <position position="69"/>
    </location>
    <ligand>
        <name>Zn(2+)</name>
        <dbReference type="ChEBI" id="CHEBI:29105"/>
        <label>1</label>
    </ligand>
</feature>
<feature type="binding site" evidence="1">
    <location>
        <position position="113"/>
    </location>
    <ligand>
        <name>Zn(2+)</name>
        <dbReference type="ChEBI" id="CHEBI:29105"/>
        <label>1</label>
    </ligand>
</feature>
<feature type="binding site" evidence="1">
    <location>
        <position position="148"/>
    </location>
    <ligand>
        <name>Zn(2+)</name>
        <dbReference type="ChEBI" id="CHEBI:29105"/>
        <label>1</label>
    </ligand>
</feature>
<feature type="binding site" evidence="1">
    <location>
        <position position="148"/>
    </location>
    <ligand>
        <name>Zn(2+)</name>
        <dbReference type="ChEBI" id="CHEBI:29105"/>
        <label>2</label>
    </ligand>
</feature>
<feature type="binding site" evidence="1">
    <location>
        <position position="182"/>
    </location>
    <ligand>
        <name>Zn(2+)</name>
        <dbReference type="ChEBI" id="CHEBI:29105"/>
        <label>2</label>
    </ligand>
</feature>
<feature type="binding site" evidence="1">
    <location>
        <position position="185"/>
    </location>
    <ligand>
        <name>Zn(2+)</name>
        <dbReference type="ChEBI" id="CHEBI:29105"/>
        <label>3</label>
    </ligand>
</feature>
<feature type="binding site" evidence="1">
    <location>
        <position position="217"/>
    </location>
    <ligand>
        <name>Zn(2+)</name>
        <dbReference type="ChEBI" id="CHEBI:29105"/>
        <label>2</label>
    </ligand>
</feature>
<feature type="binding site" evidence="1">
    <location>
        <position position="230"/>
    </location>
    <ligand>
        <name>Zn(2+)</name>
        <dbReference type="ChEBI" id="CHEBI:29105"/>
        <label>3</label>
    </ligand>
</feature>
<feature type="binding site" evidence="1">
    <location>
        <position position="232"/>
    </location>
    <ligand>
        <name>Zn(2+)</name>
        <dbReference type="ChEBI" id="CHEBI:29105"/>
        <label>3</label>
    </ligand>
</feature>
<feature type="binding site" evidence="1">
    <location>
        <position position="262"/>
    </location>
    <ligand>
        <name>Zn(2+)</name>
        <dbReference type="ChEBI" id="CHEBI:29105"/>
        <label>2</label>
    </ligand>
</feature>
<proteinExistence type="inferred from homology"/>
<organism>
    <name type="scientific">Bifidobacterium longum (strain DJO10A)</name>
    <dbReference type="NCBI Taxonomy" id="205913"/>
    <lineage>
        <taxon>Bacteria</taxon>
        <taxon>Bacillati</taxon>
        <taxon>Actinomycetota</taxon>
        <taxon>Actinomycetes</taxon>
        <taxon>Bifidobacteriales</taxon>
        <taxon>Bifidobacteriaceae</taxon>
        <taxon>Bifidobacterium</taxon>
    </lineage>
</organism>
<gene>
    <name evidence="1" type="primary">nfo</name>
    <name type="ordered locus">BLD_0486</name>
</gene>
<accession>B3DS13</accession>
<comment type="function">
    <text evidence="1">Endonuclease IV plays a role in DNA repair. It cleaves phosphodiester bonds at apurinic or apyrimidinic (AP) sites, generating a 3'-hydroxyl group and a 5'-terminal sugar phosphate.</text>
</comment>
<comment type="catalytic activity">
    <reaction evidence="1">
        <text>Endonucleolytic cleavage to 5'-phosphooligonucleotide end-products.</text>
        <dbReference type="EC" id="3.1.21.2"/>
    </reaction>
</comment>
<comment type="cofactor">
    <cofactor evidence="1">
        <name>Zn(2+)</name>
        <dbReference type="ChEBI" id="CHEBI:29105"/>
    </cofactor>
    <text evidence="1">Binds 3 Zn(2+) ions.</text>
</comment>
<comment type="similarity">
    <text evidence="1">Belongs to the AP endonuclease 2 family.</text>
</comment>
<reference key="1">
    <citation type="journal article" date="2008" name="BMC Genomics">
        <title>Comparative genomic analysis of the gut bacterium Bifidobacterium longum reveals loci susceptible to deletion during pure culture growth.</title>
        <authorList>
            <person name="Lee J.H."/>
            <person name="Karamychev V.N."/>
            <person name="Kozyavkin S.A."/>
            <person name="Mills D."/>
            <person name="Pavlov A.R."/>
            <person name="Pavlova N.V."/>
            <person name="Polouchine N.N."/>
            <person name="Richardson P.M."/>
            <person name="Shakhova V.V."/>
            <person name="Slesarev A.I."/>
            <person name="Weimer B."/>
            <person name="O'Sullivan D.J."/>
        </authorList>
    </citation>
    <scope>NUCLEOTIDE SEQUENCE [LARGE SCALE GENOMIC DNA]</scope>
    <source>
        <strain>DJO10A</strain>
    </source>
</reference>
<sequence length="283" mass="30667">MMELYIGSHLSTAGGWNALLERSHEEGGTAFAFFPRSPYGKRSKALDPAGAAAFGARLKAEGYGPLVVHAPYVYNLAGKDEAKRTFAIEALAEDIELLTAIREAGQEVYINIHPGAHVGQGTETGCRLISEGLNQVFERTTGVMVLLETMAGKGTECGRNFEELATIMNGVENKANVGVTFDTCHVLDAGYDLVHDYDGVMRQLDEAIGLAEVKAIHVNDSQFGLGSHKDRHANIGQGQLGIPFFTRLVNDPTMAKLPMILETKEQTPTTHRDEIALLRGLVD</sequence>
<dbReference type="EC" id="3.1.21.2" evidence="1"/>
<dbReference type="EMBL" id="CP000605">
    <property type="protein sequence ID" value="ACD97932.1"/>
    <property type="molecule type" value="Genomic_DNA"/>
</dbReference>
<dbReference type="RefSeq" id="WP_012471866.1">
    <property type="nucleotide sequence ID" value="NZ_AABM02000001.1"/>
</dbReference>
<dbReference type="SMR" id="B3DS13"/>
<dbReference type="KEGG" id="blj:BLD_0486"/>
<dbReference type="HOGENOM" id="CLU_025885_4_1_11"/>
<dbReference type="Proteomes" id="UP000002419">
    <property type="component" value="Chromosome"/>
</dbReference>
<dbReference type="GO" id="GO:0008833">
    <property type="term" value="F:deoxyribonuclease IV (phage-T4-induced) activity"/>
    <property type="evidence" value="ECO:0007669"/>
    <property type="project" value="UniProtKB-UniRule"/>
</dbReference>
<dbReference type="GO" id="GO:0003677">
    <property type="term" value="F:DNA binding"/>
    <property type="evidence" value="ECO:0007669"/>
    <property type="project" value="InterPro"/>
</dbReference>
<dbReference type="GO" id="GO:0003906">
    <property type="term" value="F:DNA-(apurinic or apyrimidinic site) endonuclease activity"/>
    <property type="evidence" value="ECO:0007669"/>
    <property type="project" value="TreeGrafter"/>
</dbReference>
<dbReference type="GO" id="GO:0008081">
    <property type="term" value="F:phosphoric diester hydrolase activity"/>
    <property type="evidence" value="ECO:0007669"/>
    <property type="project" value="TreeGrafter"/>
</dbReference>
<dbReference type="GO" id="GO:0008270">
    <property type="term" value="F:zinc ion binding"/>
    <property type="evidence" value="ECO:0007669"/>
    <property type="project" value="UniProtKB-UniRule"/>
</dbReference>
<dbReference type="GO" id="GO:0006284">
    <property type="term" value="P:base-excision repair"/>
    <property type="evidence" value="ECO:0007669"/>
    <property type="project" value="TreeGrafter"/>
</dbReference>
<dbReference type="CDD" id="cd00019">
    <property type="entry name" value="AP2Ec"/>
    <property type="match status" value="1"/>
</dbReference>
<dbReference type="FunFam" id="3.20.20.150:FF:000001">
    <property type="entry name" value="Probable endonuclease 4"/>
    <property type="match status" value="1"/>
</dbReference>
<dbReference type="Gene3D" id="3.20.20.150">
    <property type="entry name" value="Divalent-metal-dependent TIM barrel enzymes"/>
    <property type="match status" value="1"/>
</dbReference>
<dbReference type="HAMAP" id="MF_00152">
    <property type="entry name" value="Nfo"/>
    <property type="match status" value="1"/>
</dbReference>
<dbReference type="InterPro" id="IPR001719">
    <property type="entry name" value="AP_endonuc_2"/>
</dbReference>
<dbReference type="InterPro" id="IPR018246">
    <property type="entry name" value="AP_endonuc_F2_Zn_BS"/>
</dbReference>
<dbReference type="InterPro" id="IPR036237">
    <property type="entry name" value="Xyl_isomerase-like_sf"/>
</dbReference>
<dbReference type="InterPro" id="IPR013022">
    <property type="entry name" value="Xyl_isomerase-like_TIM-brl"/>
</dbReference>
<dbReference type="NCBIfam" id="TIGR00587">
    <property type="entry name" value="nfo"/>
    <property type="match status" value="1"/>
</dbReference>
<dbReference type="PANTHER" id="PTHR21445:SF0">
    <property type="entry name" value="APURINIC-APYRIMIDINIC ENDONUCLEASE"/>
    <property type="match status" value="1"/>
</dbReference>
<dbReference type="PANTHER" id="PTHR21445">
    <property type="entry name" value="ENDONUCLEASE IV ENDODEOXYRIBONUCLEASE IV"/>
    <property type="match status" value="1"/>
</dbReference>
<dbReference type="Pfam" id="PF01261">
    <property type="entry name" value="AP_endonuc_2"/>
    <property type="match status" value="1"/>
</dbReference>
<dbReference type="SMART" id="SM00518">
    <property type="entry name" value="AP2Ec"/>
    <property type="match status" value="1"/>
</dbReference>
<dbReference type="SUPFAM" id="SSF51658">
    <property type="entry name" value="Xylose isomerase-like"/>
    <property type="match status" value="1"/>
</dbReference>
<dbReference type="PROSITE" id="PS00730">
    <property type="entry name" value="AP_NUCLEASE_F2_2"/>
    <property type="match status" value="1"/>
</dbReference>
<dbReference type="PROSITE" id="PS00731">
    <property type="entry name" value="AP_NUCLEASE_F2_3"/>
    <property type="match status" value="1"/>
</dbReference>
<dbReference type="PROSITE" id="PS51432">
    <property type="entry name" value="AP_NUCLEASE_F2_4"/>
    <property type="match status" value="1"/>
</dbReference>
<evidence type="ECO:0000255" key="1">
    <source>
        <dbReference type="HAMAP-Rule" id="MF_00152"/>
    </source>
</evidence>
<name>END4_BIFLD</name>
<keyword id="KW-0227">DNA damage</keyword>
<keyword id="KW-0234">DNA repair</keyword>
<keyword id="KW-0255">Endonuclease</keyword>
<keyword id="KW-0378">Hydrolase</keyword>
<keyword id="KW-0479">Metal-binding</keyword>
<keyword id="KW-0540">Nuclease</keyword>
<keyword id="KW-0862">Zinc</keyword>